<gene>
    <name evidence="1" type="primary">atpG</name>
    <name type="ordered locus">Chy400_3288</name>
</gene>
<proteinExistence type="inferred from homology"/>
<name>ATPG_CHLSY</name>
<organism>
    <name type="scientific">Chloroflexus aurantiacus (strain ATCC 29364 / DSM 637 / Y-400-fl)</name>
    <dbReference type="NCBI Taxonomy" id="480224"/>
    <lineage>
        <taxon>Bacteria</taxon>
        <taxon>Bacillati</taxon>
        <taxon>Chloroflexota</taxon>
        <taxon>Chloroflexia</taxon>
        <taxon>Chloroflexales</taxon>
        <taxon>Chloroflexineae</taxon>
        <taxon>Chloroflexaceae</taxon>
        <taxon>Chloroflexus</taxon>
    </lineage>
</organism>
<accession>B9LBM1</accession>
<reference key="1">
    <citation type="submission" date="2009-01" db="EMBL/GenBank/DDBJ databases">
        <title>Complete sequence of Chloroflexus sp. Y-400-fl.</title>
        <authorList>
            <consortium name="US DOE Joint Genome Institute"/>
            <person name="Lucas S."/>
            <person name="Copeland A."/>
            <person name="Lapidus A."/>
            <person name="Glavina del Rio T."/>
            <person name="Dalin E."/>
            <person name="Tice H."/>
            <person name="Bruce D."/>
            <person name="Goodwin L."/>
            <person name="Pitluck S."/>
            <person name="Sims D."/>
            <person name="Kiss H."/>
            <person name="Brettin T."/>
            <person name="Detter J.C."/>
            <person name="Han C."/>
            <person name="Larimer F."/>
            <person name="Land M."/>
            <person name="Hauser L."/>
            <person name="Kyrpides N."/>
            <person name="Ovchinnikova G."/>
            <person name="Bryant D.A."/>
            <person name="Richardson P."/>
        </authorList>
    </citation>
    <scope>NUCLEOTIDE SEQUENCE [LARGE SCALE GENOMIC DNA]</scope>
    <source>
        <strain>ATCC 29364 / DSM 637 / Y-400-fl</strain>
    </source>
</reference>
<comment type="function">
    <text evidence="1">Produces ATP from ADP in the presence of a proton gradient across the membrane. The gamma chain is believed to be important in regulating ATPase activity and the flow of protons through the CF(0) complex.</text>
</comment>
<comment type="subunit">
    <text evidence="1">F-type ATPases have 2 components, CF(1) - the catalytic core - and CF(0) - the membrane proton channel. CF(1) has five subunits: alpha(3), beta(3), gamma(1), delta(1), epsilon(1). CF(0) has three main subunits: a, b and c.</text>
</comment>
<comment type="subcellular location">
    <subcellularLocation>
        <location evidence="1">Cell membrane</location>
        <topology evidence="1">Peripheral membrane protein</topology>
    </subcellularLocation>
</comment>
<comment type="similarity">
    <text evidence="1">Belongs to the ATPase gamma chain family.</text>
</comment>
<sequence length="290" mass="32075">MPSSREIKRRIRSVKNVAQITRAMEMVSASKMRRAQRNVLATRPYADRMREVMANLTARVVGAARRGTLLEKRETVKSVALLVVTPDRGLCGSLVANVLRRAGRFITEQRAMGRTVDVYTFGRKGRDFFLRTGFAPAGEATRLGDAPKLEAILGVAISAINGFQSGKYDELYIIYSEFINTLVQRPAIKQLLPVESPDISTTTNVDYTYEPGEEEVLNSILPRYVETQIYQAVLESIASEHSARMVAMRNATNNAKDLVRDLTLSFNKARQAAITKEVSEIASGAAALTS</sequence>
<dbReference type="EMBL" id="CP001364">
    <property type="protein sequence ID" value="ACM54666.1"/>
    <property type="molecule type" value="Genomic_DNA"/>
</dbReference>
<dbReference type="SMR" id="B9LBM1"/>
<dbReference type="KEGG" id="chl:Chy400_3288"/>
<dbReference type="HOGENOM" id="CLU_050669_0_1_0"/>
<dbReference type="OrthoDB" id="9812769at2"/>
<dbReference type="GO" id="GO:0005886">
    <property type="term" value="C:plasma membrane"/>
    <property type="evidence" value="ECO:0007669"/>
    <property type="project" value="UniProtKB-SubCell"/>
</dbReference>
<dbReference type="GO" id="GO:0045259">
    <property type="term" value="C:proton-transporting ATP synthase complex"/>
    <property type="evidence" value="ECO:0007669"/>
    <property type="project" value="UniProtKB-KW"/>
</dbReference>
<dbReference type="GO" id="GO:0005524">
    <property type="term" value="F:ATP binding"/>
    <property type="evidence" value="ECO:0007669"/>
    <property type="project" value="UniProtKB-UniRule"/>
</dbReference>
<dbReference type="GO" id="GO:0046933">
    <property type="term" value="F:proton-transporting ATP synthase activity, rotational mechanism"/>
    <property type="evidence" value="ECO:0007669"/>
    <property type="project" value="UniProtKB-UniRule"/>
</dbReference>
<dbReference type="GO" id="GO:0042777">
    <property type="term" value="P:proton motive force-driven plasma membrane ATP synthesis"/>
    <property type="evidence" value="ECO:0007669"/>
    <property type="project" value="UniProtKB-UniRule"/>
</dbReference>
<dbReference type="CDD" id="cd12151">
    <property type="entry name" value="F1-ATPase_gamma"/>
    <property type="match status" value="1"/>
</dbReference>
<dbReference type="FunFam" id="1.10.287.80:FF:000009">
    <property type="entry name" value="ATP synthase gamma chain"/>
    <property type="match status" value="1"/>
</dbReference>
<dbReference type="FunFam" id="1.10.287.80:FF:000010">
    <property type="entry name" value="ATP synthase gamma chain"/>
    <property type="match status" value="1"/>
</dbReference>
<dbReference type="FunFam" id="3.40.1380.10:FF:000006">
    <property type="entry name" value="ATP synthase gamma chain"/>
    <property type="match status" value="1"/>
</dbReference>
<dbReference type="Gene3D" id="3.40.1380.10">
    <property type="match status" value="1"/>
</dbReference>
<dbReference type="Gene3D" id="1.10.287.80">
    <property type="entry name" value="ATP synthase, gamma subunit, helix hairpin domain"/>
    <property type="match status" value="2"/>
</dbReference>
<dbReference type="HAMAP" id="MF_00815">
    <property type="entry name" value="ATP_synth_gamma_bact"/>
    <property type="match status" value="1"/>
</dbReference>
<dbReference type="InterPro" id="IPR035968">
    <property type="entry name" value="ATP_synth_F1_ATPase_gsu"/>
</dbReference>
<dbReference type="InterPro" id="IPR000131">
    <property type="entry name" value="ATP_synth_F1_gsu"/>
</dbReference>
<dbReference type="InterPro" id="IPR023632">
    <property type="entry name" value="ATP_synth_F1_gsu_CS"/>
</dbReference>
<dbReference type="NCBIfam" id="TIGR01146">
    <property type="entry name" value="ATPsyn_F1gamma"/>
    <property type="match status" value="1"/>
</dbReference>
<dbReference type="NCBIfam" id="NF010709">
    <property type="entry name" value="PRK14111.1"/>
    <property type="match status" value="1"/>
</dbReference>
<dbReference type="PANTHER" id="PTHR11693">
    <property type="entry name" value="ATP SYNTHASE GAMMA CHAIN"/>
    <property type="match status" value="1"/>
</dbReference>
<dbReference type="PANTHER" id="PTHR11693:SF22">
    <property type="entry name" value="ATP SYNTHASE SUBUNIT GAMMA, MITOCHONDRIAL"/>
    <property type="match status" value="1"/>
</dbReference>
<dbReference type="Pfam" id="PF00231">
    <property type="entry name" value="ATP-synt"/>
    <property type="match status" value="1"/>
</dbReference>
<dbReference type="PRINTS" id="PR00126">
    <property type="entry name" value="ATPASEGAMMA"/>
</dbReference>
<dbReference type="SUPFAM" id="SSF52943">
    <property type="entry name" value="ATP synthase (F1-ATPase), gamma subunit"/>
    <property type="match status" value="1"/>
</dbReference>
<dbReference type="PROSITE" id="PS00153">
    <property type="entry name" value="ATPASE_GAMMA"/>
    <property type="match status" value="1"/>
</dbReference>
<evidence type="ECO:0000255" key="1">
    <source>
        <dbReference type="HAMAP-Rule" id="MF_00815"/>
    </source>
</evidence>
<feature type="chain" id="PRO_1000148610" description="ATP synthase gamma chain">
    <location>
        <begin position="1"/>
        <end position="290"/>
    </location>
</feature>
<keyword id="KW-0066">ATP synthesis</keyword>
<keyword id="KW-1003">Cell membrane</keyword>
<keyword id="KW-0139">CF(1)</keyword>
<keyword id="KW-0375">Hydrogen ion transport</keyword>
<keyword id="KW-0406">Ion transport</keyword>
<keyword id="KW-0472">Membrane</keyword>
<keyword id="KW-0813">Transport</keyword>
<protein>
    <recommendedName>
        <fullName evidence="1">ATP synthase gamma chain</fullName>
    </recommendedName>
    <alternativeName>
        <fullName evidence="1">ATP synthase F1 sector gamma subunit</fullName>
    </alternativeName>
    <alternativeName>
        <fullName evidence="1">F-ATPase gamma subunit</fullName>
    </alternativeName>
</protein>